<feature type="signal peptide" evidence="2">
    <location>
        <begin position="1"/>
        <end position="22"/>
    </location>
</feature>
<feature type="chain" id="PRO_0000346789" description="ADP-dependent glucokinase">
    <location>
        <begin position="23"/>
        <end position="497"/>
    </location>
</feature>
<feature type="domain" description="ADPK" evidence="3">
    <location>
        <begin position="52"/>
        <end position="497"/>
    </location>
</feature>
<feature type="active site" description="Proton acceptor" evidence="3">
    <location>
        <position position="481"/>
    </location>
</feature>
<feature type="binding site" evidence="3">
    <location>
        <position position="297"/>
    </location>
    <ligand>
        <name>Mg(2+)</name>
        <dbReference type="ChEBI" id="CHEBI:18420"/>
    </ligand>
</feature>
<feature type="binding site" evidence="3">
    <location>
        <position position="328"/>
    </location>
    <ligand>
        <name>Mg(2+)</name>
        <dbReference type="ChEBI" id="CHEBI:18420"/>
    </ligand>
</feature>
<feature type="binding site" evidence="3">
    <location>
        <position position="481"/>
    </location>
    <ligand>
        <name>Mg(2+)</name>
        <dbReference type="ChEBI" id="CHEBI:18420"/>
    </ligand>
</feature>
<dbReference type="EC" id="2.7.1.147"/>
<dbReference type="EMBL" id="BC133568">
    <property type="protein sequence ID" value="AAI33569.1"/>
    <property type="molecule type" value="mRNA"/>
</dbReference>
<dbReference type="RefSeq" id="NP_001075907.1">
    <property type="nucleotide sequence ID" value="NM_001082438.2"/>
</dbReference>
<dbReference type="SMR" id="A2VE47"/>
<dbReference type="FunCoup" id="A2VE47">
    <property type="interactions" value="2091"/>
</dbReference>
<dbReference type="STRING" id="9913.ENSBTAP00000002065"/>
<dbReference type="PaxDb" id="9913-ENSBTAP00000002065"/>
<dbReference type="Ensembl" id="ENSBTAT00000002065.5">
    <property type="protein sequence ID" value="ENSBTAP00000002065.4"/>
    <property type="gene ID" value="ENSBTAG00000001578.5"/>
</dbReference>
<dbReference type="GeneID" id="518158"/>
<dbReference type="KEGG" id="bta:518158"/>
<dbReference type="CTD" id="83440"/>
<dbReference type="VEuPathDB" id="HostDB:ENSBTAG00000001578"/>
<dbReference type="VGNC" id="VGNC:25689">
    <property type="gene designation" value="ADPGK"/>
</dbReference>
<dbReference type="eggNOG" id="KOG4184">
    <property type="taxonomic scope" value="Eukaryota"/>
</dbReference>
<dbReference type="GeneTree" id="ENSGT00390000017953"/>
<dbReference type="HOGENOM" id="CLU_032362_0_0_1"/>
<dbReference type="InParanoid" id="A2VE47"/>
<dbReference type="OMA" id="FIHYMGR"/>
<dbReference type="OrthoDB" id="5847021at2759"/>
<dbReference type="TreeFam" id="TF313401"/>
<dbReference type="Reactome" id="R-BTA-70171">
    <property type="pathway name" value="Glycolysis"/>
</dbReference>
<dbReference type="UniPathway" id="UPA00109"/>
<dbReference type="Proteomes" id="UP000009136">
    <property type="component" value="Chromosome 10"/>
</dbReference>
<dbReference type="Bgee" id="ENSBTAG00000001578">
    <property type="expression patterns" value="Expressed in diaphragm and 105 other cell types or tissues"/>
</dbReference>
<dbReference type="GO" id="GO:0005783">
    <property type="term" value="C:endoplasmic reticulum"/>
    <property type="evidence" value="ECO:0000318"/>
    <property type="project" value="GO_Central"/>
</dbReference>
<dbReference type="GO" id="GO:0005576">
    <property type="term" value="C:extracellular region"/>
    <property type="evidence" value="ECO:0007669"/>
    <property type="project" value="UniProtKB-SubCell"/>
</dbReference>
<dbReference type="GO" id="GO:0043843">
    <property type="term" value="F:ADP-specific glucokinase activity"/>
    <property type="evidence" value="ECO:0000318"/>
    <property type="project" value="GO_Central"/>
</dbReference>
<dbReference type="GO" id="GO:0046872">
    <property type="term" value="F:metal ion binding"/>
    <property type="evidence" value="ECO:0007669"/>
    <property type="project" value="UniProtKB-KW"/>
</dbReference>
<dbReference type="GO" id="GO:0006006">
    <property type="term" value="P:glucose metabolic process"/>
    <property type="evidence" value="ECO:0000318"/>
    <property type="project" value="GO_Central"/>
</dbReference>
<dbReference type="GO" id="GO:0006096">
    <property type="term" value="P:glycolytic process"/>
    <property type="evidence" value="ECO:0007669"/>
    <property type="project" value="UniProtKB-UniPathway"/>
</dbReference>
<dbReference type="CDD" id="cd01938">
    <property type="entry name" value="ADPGK_ADPPFK"/>
    <property type="match status" value="1"/>
</dbReference>
<dbReference type="FunFam" id="3.40.1190.20:FF:000020">
    <property type="entry name" value="ADP-dependent glucokinase isoform X1"/>
    <property type="match status" value="1"/>
</dbReference>
<dbReference type="Gene3D" id="3.40.1190.20">
    <property type="match status" value="1"/>
</dbReference>
<dbReference type="InterPro" id="IPR007666">
    <property type="entry name" value="ADP_PFK/GK"/>
</dbReference>
<dbReference type="InterPro" id="IPR029056">
    <property type="entry name" value="Ribokinase-like"/>
</dbReference>
<dbReference type="PANTHER" id="PTHR21208">
    <property type="entry name" value="ADP-DEPENDENT GLUCOKINASE"/>
    <property type="match status" value="1"/>
</dbReference>
<dbReference type="PANTHER" id="PTHR21208:SF0">
    <property type="entry name" value="ADP-DEPENDENT GLUCOKINASE"/>
    <property type="match status" value="1"/>
</dbReference>
<dbReference type="Pfam" id="PF04587">
    <property type="entry name" value="ADP_PFK_GK"/>
    <property type="match status" value="1"/>
</dbReference>
<dbReference type="SUPFAM" id="SSF53613">
    <property type="entry name" value="Ribokinase-like"/>
    <property type="match status" value="1"/>
</dbReference>
<dbReference type="PROSITE" id="PS51255">
    <property type="entry name" value="ADPK"/>
    <property type="match status" value="1"/>
</dbReference>
<name>ADPGK_BOVIN</name>
<comment type="function">
    <text evidence="1">Catalyzes the phosphorylation of D-glucose to D-glucose 6-phosphate using ADP as the phosphate donor. GDP and CDP can replace ADP, but with reduced efficiency (By similarity).</text>
</comment>
<comment type="catalytic activity">
    <reaction>
        <text>D-glucose + ADP = D-glucose 6-phosphate + AMP + H(+)</text>
        <dbReference type="Rhea" id="RHEA:11460"/>
        <dbReference type="ChEBI" id="CHEBI:4167"/>
        <dbReference type="ChEBI" id="CHEBI:15378"/>
        <dbReference type="ChEBI" id="CHEBI:61548"/>
        <dbReference type="ChEBI" id="CHEBI:456215"/>
        <dbReference type="ChEBI" id="CHEBI:456216"/>
        <dbReference type="EC" id="2.7.1.147"/>
    </reaction>
</comment>
<comment type="cofactor">
    <cofactor evidence="3">
        <name>Mg(2+)</name>
        <dbReference type="ChEBI" id="CHEBI:18420"/>
    </cofactor>
    <text evidence="3">Binds 1 Mg(2+) ion per subunit.</text>
</comment>
<comment type="pathway">
    <text evidence="3">Carbohydrate degradation; glycolysis.</text>
</comment>
<comment type="subunit">
    <text evidence="1">Monomer.</text>
</comment>
<comment type="subcellular location">
    <subcellularLocation>
        <location evidence="4">Secreted</location>
    </subcellularLocation>
</comment>
<comment type="similarity">
    <text evidence="4">Belongs to the ADP-dependent glucokinase family.</text>
</comment>
<protein>
    <recommendedName>
        <fullName>ADP-dependent glucokinase</fullName>
        <shortName>ADP-GK</shortName>
        <shortName>ADPGK</shortName>
        <ecNumber>2.7.1.147</ecNumber>
    </recommendedName>
</protein>
<keyword id="KW-0324">Glycolysis</keyword>
<keyword id="KW-0418">Kinase</keyword>
<keyword id="KW-0460">Magnesium</keyword>
<keyword id="KW-0479">Metal-binding</keyword>
<keyword id="KW-1185">Reference proteome</keyword>
<keyword id="KW-0964">Secreted</keyword>
<keyword id="KW-0732">Signal</keyword>
<keyword id="KW-0808">Transferase</keyword>
<sequence>MALWRGSAYAGFLALAVGCVFLLEPQLPGSALRSLWSSLQLGPAPAPPGVGSPEGRLAAAWDALIVRPARRWRRVAVGVNACVDVVLSGVKLLQALGLSPGNGKDHSELHSRNDLEEAFVHFMGKGAAAERFFSDKETFHDIAQVASEFPEAQHYVGGNAALIGQKFAANSDLKVLLCGPVGPKLHELLDDNVFVPPESLQEVDEFHLILEYQAGEEWDQLKAPHANRFIFSHDLSNGAMNMLEVFVSSLEEFQPDLVVLSGLHMMEGQSKEFQRKRLLEVVTSISDIPTGVPVHLELASMTNKELMSTIVHQQVFPAVTSLGLNEQELLFLSQSASGPHSSLSSWNGVPDVGVVSDILFWILKEHGKSESRASDLSRIHFHTLAYHILATVDGHWANQLAAVAAGARVAATQACATETIDTRRVSLKAPHEFMTSRLEAGSRVVLNPNEPVVEWHREGVSFHFTPVLVCKDPVRTVGLGDAISAEGLFYSEVHPHL</sequence>
<proteinExistence type="evidence at transcript level"/>
<reference key="1">
    <citation type="submission" date="2007-02" db="EMBL/GenBank/DDBJ databases">
        <authorList>
            <consortium name="NIH - Mammalian Gene Collection (MGC) project"/>
        </authorList>
    </citation>
    <scope>NUCLEOTIDE SEQUENCE [LARGE SCALE MRNA]</scope>
    <source>
        <strain>Hereford</strain>
        <tissue>Thymus</tissue>
    </source>
</reference>
<accession>A2VE47</accession>
<gene>
    <name type="primary">ADPGK</name>
</gene>
<evidence type="ECO:0000250" key="1"/>
<evidence type="ECO:0000255" key="2"/>
<evidence type="ECO:0000255" key="3">
    <source>
        <dbReference type="PROSITE-ProRule" id="PRU00584"/>
    </source>
</evidence>
<evidence type="ECO:0000305" key="4"/>
<organism>
    <name type="scientific">Bos taurus</name>
    <name type="common">Bovine</name>
    <dbReference type="NCBI Taxonomy" id="9913"/>
    <lineage>
        <taxon>Eukaryota</taxon>
        <taxon>Metazoa</taxon>
        <taxon>Chordata</taxon>
        <taxon>Craniata</taxon>
        <taxon>Vertebrata</taxon>
        <taxon>Euteleostomi</taxon>
        <taxon>Mammalia</taxon>
        <taxon>Eutheria</taxon>
        <taxon>Laurasiatheria</taxon>
        <taxon>Artiodactyla</taxon>
        <taxon>Ruminantia</taxon>
        <taxon>Pecora</taxon>
        <taxon>Bovidae</taxon>
        <taxon>Bovinae</taxon>
        <taxon>Bos</taxon>
    </lineage>
</organism>